<evidence type="ECO:0000250" key="1"/>
<evidence type="ECO:0000255" key="2"/>
<evidence type="ECO:0000305" key="3"/>
<dbReference type="EMBL" id="U32230">
    <property type="protein sequence ID" value="AAB00907.1"/>
    <property type="molecule type" value="Genomic_DNA"/>
</dbReference>
<dbReference type="EMBL" id="BA000040">
    <property type="protein sequence ID" value="BAC46643.1"/>
    <property type="molecule type" value="Genomic_DNA"/>
</dbReference>
<dbReference type="RefSeq" id="NP_768018.1">
    <property type="nucleotide sequence ID" value="NC_004463.1"/>
</dbReference>
<dbReference type="RefSeq" id="WP_011084196.1">
    <property type="nucleotide sequence ID" value="NC_004463.1"/>
</dbReference>
<dbReference type="SMR" id="P53573"/>
<dbReference type="STRING" id="224911.AAV28_03800"/>
<dbReference type="EnsemblBacteria" id="BAC46643">
    <property type="protein sequence ID" value="BAC46643"/>
    <property type="gene ID" value="BAC46643"/>
</dbReference>
<dbReference type="GeneID" id="46488646"/>
<dbReference type="KEGG" id="bja:blr1378"/>
<dbReference type="PATRIC" id="fig|224911.44.peg.800"/>
<dbReference type="eggNOG" id="COG2025">
    <property type="taxonomic scope" value="Bacteria"/>
</dbReference>
<dbReference type="HOGENOM" id="CLU_034178_0_0_5"/>
<dbReference type="InParanoid" id="P53573"/>
<dbReference type="OrthoDB" id="9770286at2"/>
<dbReference type="PhylomeDB" id="P53573"/>
<dbReference type="Proteomes" id="UP000002526">
    <property type="component" value="Chromosome"/>
</dbReference>
<dbReference type="GO" id="GO:0009055">
    <property type="term" value="F:electron transfer activity"/>
    <property type="evidence" value="ECO:0000318"/>
    <property type="project" value="GO_Central"/>
</dbReference>
<dbReference type="GO" id="GO:0050660">
    <property type="term" value="F:flavin adenine dinucleotide binding"/>
    <property type="evidence" value="ECO:0000318"/>
    <property type="project" value="GO_Central"/>
</dbReference>
<dbReference type="GO" id="GO:0033539">
    <property type="term" value="P:fatty acid beta-oxidation using acyl-CoA dehydrogenase"/>
    <property type="evidence" value="ECO:0000318"/>
    <property type="project" value="GO_Central"/>
</dbReference>
<dbReference type="CDD" id="cd01715">
    <property type="entry name" value="ETF_alpha"/>
    <property type="match status" value="1"/>
</dbReference>
<dbReference type="FunFam" id="3.40.50.620:FF:000041">
    <property type="entry name" value="Electron transfer flavoprotein alpha subunit"/>
    <property type="match status" value="1"/>
</dbReference>
<dbReference type="FunFam" id="3.40.50.1220:FF:000001">
    <property type="entry name" value="Electron transfer flavoprotein, alpha subunit"/>
    <property type="match status" value="1"/>
</dbReference>
<dbReference type="Gene3D" id="3.40.50.620">
    <property type="entry name" value="HUPs"/>
    <property type="match status" value="1"/>
</dbReference>
<dbReference type="Gene3D" id="3.40.50.1220">
    <property type="entry name" value="TPP-binding domain"/>
    <property type="match status" value="1"/>
</dbReference>
<dbReference type="InterPro" id="IPR029035">
    <property type="entry name" value="DHS-like_NAD/FAD-binding_dom"/>
</dbReference>
<dbReference type="InterPro" id="IPR014730">
    <property type="entry name" value="ETF_a/b_N"/>
</dbReference>
<dbReference type="InterPro" id="IPR001308">
    <property type="entry name" value="ETF_a/FixB"/>
</dbReference>
<dbReference type="InterPro" id="IPR033947">
    <property type="entry name" value="ETF_alpha_N"/>
</dbReference>
<dbReference type="InterPro" id="IPR014731">
    <property type="entry name" value="ETF_asu_C"/>
</dbReference>
<dbReference type="InterPro" id="IPR018206">
    <property type="entry name" value="ETF_asu_C_CS"/>
</dbReference>
<dbReference type="InterPro" id="IPR014729">
    <property type="entry name" value="Rossmann-like_a/b/a_fold"/>
</dbReference>
<dbReference type="PANTHER" id="PTHR43153">
    <property type="entry name" value="ELECTRON TRANSFER FLAVOPROTEIN ALPHA"/>
    <property type="match status" value="1"/>
</dbReference>
<dbReference type="PANTHER" id="PTHR43153:SF1">
    <property type="entry name" value="ELECTRON TRANSFER FLAVOPROTEIN SUBUNIT ALPHA, MITOCHONDRIAL"/>
    <property type="match status" value="1"/>
</dbReference>
<dbReference type="Pfam" id="PF01012">
    <property type="entry name" value="ETF"/>
    <property type="match status" value="1"/>
</dbReference>
<dbReference type="Pfam" id="PF00766">
    <property type="entry name" value="ETF_alpha"/>
    <property type="match status" value="1"/>
</dbReference>
<dbReference type="PIRSF" id="PIRSF000089">
    <property type="entry name" value="Electra_flavoP_a"/>
    <property type="match status" value="1"/>
</dbReference>
<dbReference type="SMART" id="SM00893">
    <property type="entry name" value="ETF"/>
    <property type="match status" value="1"/>
</dbReference>
<dbReference type="SUPFAM" id="SSF52402">
    <property type="entry name" value="Adenine nucleotide alpha hydrolases-like"/>
    <property type="match status" value="1"/>
</dbReference>
<dbReference type="SUPFAM" id="SSF52467">
    <property type="entry name" value="DHS-like NAD/FAD-binding domain"/>
    <property type="match status" value="1"/>
</dbReference>
<dbReference type="PROSITE" id="PS00696">
    <property type="entry name" value="ETF_ALPHA"/>
    <property type="match status" value="1"/>
</dbReference>
<comment type="function">
    <text evidence="1">The electron transfer flavoprotein serves as a specific electron acceptor for other dehydrogenases. It transfers the electrons to the main respiratory chain via ETF-ubiquinone oxidoreductase (ETF dehydrogenase) (By similarity).</text>
</comment>
<comment type="cofactor">
    <cofactor evidence="1">
        <name>FAD</name>
        <dbReference type="ChEBI" id="CHEBI:57692"/>
    </cofactor>
    <text evidence="1">Binds 1 FAD per dimer.</text>
</comment>
<comment type="subunit">
    <text>Heterodimer of an alpha and a beta subunit.</text>
</comment>
<comment type="similarity">
    <text evidence="3">Belongs to the ETF alpha-subunit/FixB family.</text>
</comment>
<reference key="1">
    <citation type="journal article" date="1996" name="Arch. Microbiol.">
        <title>Bradyrhizobium japonicum possesses two discrete sets of electron transfer flavoprotein genes: fixA, fixB and etfS, etfL.</title>
        <authorList>
            <person name="Weidenhaupt M."/>
            <person name="Rossi P."/>
            <person name="Beck C."/>
            <person name="Fischer H.-M."/>
            <person name="Hennecke H."/>
        </authorList>
    </citation>
    <scope>NUCLEOTIDE SEQUENCE [GENOMIC DNA]</scope>
    <source>
        <strain>USDA 3I1b110</strain>
    </source>
</reference>
<reference key="2">
    <citation type="journal article" date="2002" name="DNA Res.">
        <title>Complete genomic sequence of nitrogen-fixing symbiotic bacterium Bradyrhizobium japonicum USDA110.</title>
        <authorList>
            <person name="Kaneko T."/>
            <person name="Nakamura Y."/>
            <person name="Sato S."/>
            <person name="Minamisawa K."/>
            <person name="Uchiumi T."/>
            <person name="Sasamoto S."/>
            <person name="Watanabe A."/>
            <person name="Idesawa K."/>
            <person name="Iriguchi M."/>
            <person name="Kawashima K."/>
            <person name="Kohara M."/>
            <person name="Matsumoto M."/>
            <person name="Shimpo S."/>
            <person name="Tsuruoka H."/>
            <person name="Wada T."/>
            <person name="Yamada M."/>
            <person name="Tabata S."/>
        </authorList>
    </citation>
    <scope>NUCLEOTIDE SEQUENCE [LARGE SCALE GENOMIC DNA]</scope>
    <source>
        <strain>JCM 10833 / BCRC 13528 / IAM 13628 / NBRC 14792 / USDA 110</strain>
    </source>
</reference>
<gene>
    <name type="primary">etfA</name>
    <name type="synonym">etfL</name>
    <name type="ordered locus">blr1378</name>
</gene>
<accession>P53573</accession>
<protein>
    <recommendedName>
        <fullName>Electron transfer flavoprotein subunit alpha</fullName>
        <shortName>Alpha-ETF</shortName>
    </recommendedName>
    <alternativeName>
        <fullName>Electron transfer flavoprotein large subunit</fullName>
        <shortName>ETFLS</shortName>
    </alternativeName>
</protein>
<sequence length="314" mass="32206">MTTLLIAEHDNASLKDATNKALTAAAALGADVEVLVAGEGAKAAADAAAKLAGVKKVLLADGALYAHDLAEPLAALIVSLAPSYDAIVAPATSRFKNVMPRVAALLDVMQVSEIIKVVAPDTYERPIYAGNAIQTVKSKDAKKVITVRTSTFAAAGEGGSAPVESVQAAADPGLSSFVGEEVAKSDRPELTSAKIIVSGGRAMQSRENFAKYIEPLADKLGAGVGASRAAVDAGYAPNDWQVGQTGKVVAPELYVAVGISGAIQHLAGMKDSKVIVAINKDEDAPIFQVADYGLVADLYQAVPELTAELGKLGK</sequence>
<proteinExistence type="inferred from homology"/>
<feature type="chain" id="PRO_0000167846" description="Electron transfer flavoprotein subunit alpha">
    <location>
        <begin position="1"/>
        <end position="314"/>
    </location>
</feature>
<feature type="binding site" evidence="2">
    <location>
        <begin position="253"/>
        <end position="281"/>
    </location>
    <ligand>
        <name>FAD</name>
        <dbReference type="ChEBI" id="CHEBI:57692"/>
    </ligand>
</feature>
<feature type="sequence conflict" description="In Ref. 1; AAB00907." evidence="3" ref="1">
    <original>A</original>
    <variation>G</variation>
    <location>
        <position position="70"/>
    </location>
</feature>
<name>ETFA_BRADU</name>
<organism>
    <name type="scientific">Bradyrhizobium diazoefficiens (strain JCM 10833 / BCRC 13528 / IAM 13628 / NBRC 14792 / USDA 110)</name>
    <dbReference type="NCBI Taxonomy" id="224911"/>
    <lineage>
        <taxon>Bacteria</taxon>
        <taxon>Pseudomonadati</taxon>
        <taxon>Pseudomonadota</taxon>
        <taxon>Alphaproteobacteria</taxon>
        <taxon>Hyphomicrobiales</taxon>
        <taxon>Nitrobacteraceae</taxon>
        <taxon>Bradyrhizobium</taxon>
    </lineage>
</organism>
<keyword id="KW-0249">Electron transport</keyword>
<keyword id="KW-0274">FAD</keyword>
<keyword id="KW-0285">Flavoprotein</keyword>
<keyword id="KW-1185">Reference proteome</keyword>
<keyword id="KW-0813">Transport</keyword>